<reference key="1">
    <citation type="submission" date="2004-11" db="EMBL/GenBank/DDBJ databases">
        <authorList>
            <consortium name="The German cDNA consortium"/>
        </authorList>
    </citation>
    <scope>NUCLEOTIDE SEQUENCE [LARGE SCALE MRNA]</scope>
    <source>
        <tissue>Kidney</tissue>
    </source>
</reference>
<proteinExistence type="evidence at transcript level"/>
<sequence>MAILFAVVARGTTILAKHAWCGGNFLEVTEQILAKIPSENNKLTYPHGNYLFHYICQDRIVYLCITDDDFERSRAFNFLNEIKKRFQTTYGSRAQTALPYAMNSEFSSVLAAQLKHHSENKGLDKVMETQAQVDELKGIMVRNIDLVAQRGERLELLIDKTENLVDSSVTFKTTSRNLARAMCMKNLKLTIIIIIVSIVFIYIIVSPLCGGFTWPSCVKK</sequence>
<organism>
    <name type="scientific">Pongo abelii</name>
    <name type="common">Sumatran orangutan</name>
    <name type="synonym">Pongo pygmaeus abelii</name>
    <dbReference type="NCBI Taxonomy" id="9601"/>
    <lineage>
        <taxon>Eukaryota</taxon>
        <taxon>Metazoa</taxon>
        <taxon>Chordata</taxon>
        <taxon>Craniata</taxon>
        <taxon>Vertebrata</taxon>
        <taxon>Euteleostomi</taxon>
        <taxon>Mammalia</taxon>
        <taxon>Eutheria</taxon>
        <taxon>Euarchontoglires</taxon>
        <taxon>Primates</taxon>
        <taxon>Haplorrhini</taxon>
        <taxon>Catarrhini</taxon>
        <taxon>Hominidae</taxon>
        <taxon>Pongo</taxon>
    </lineage>
</organism>
<feature type="initiator methionine" description="Removed" evidence="2">
    <location>
        <position position="1"/>
    </location>
</feature>
<feature type="chain" id="PRO_0000206762" description="Vesicle-associated membrane protein 7">
    <location>
        <begin position="2"/>
        <end position="220"/>
    </location>
</feature>
<feature type="topological domain" description="Cytoplasmic" evidence="4">
    <location>
        <begin position="2"/>
        <end position="188"/>
    </location>
</feature>
<feature type="transmembrane region" description="Helical; Anchor for type IV membrane protein" evidence="4">
    <location>
        <begin position="189"/>
        <end position="209"/>
    </location>
</feature>
<feature type="topological domain" description="Vesicular" evidence="4">
    <location>
        <begin position="210"/>
        <end position="220"/>
    </location>
</feature>
<feature type="domain" description="Longin" evidence="5">
    <location>
        <begin position="7"/>
        <end position="110"/>
    </location>
</feature>
<feature type="domain" description="v-SNARE coiled-coil homology" evidence="6">
    <location>
        <begin position="125"/>
        <end position="185"/>
    </location>
</feature>
<feature type="modified residue" description="N-acetylalanine" evidence="2">
    <location>
        <position position="2"/>
    </location>
</feature>
<feature type="modified residue" description="Phosphoserine" evidence="2">
    <location>
        <position position="167"/>
    </location>
</feature>
<feature type="modified residue" description="Phosphoserine" evidence="3">
    <location>
        <position position="168"/>
    </location>
</feature>
<comment type="function">
    <text evidence="1">Involved in the targeting and/or fusion of transport vesicles to their target membrane during transport of proteins from the early endosome to the lysosome. Required for heterotypic fusion of late endosomes with lysosomes and homotypic lysosomal fusion. Required for calcium regulated lysosomal exocytosis. Involved in the export of chylomicrons from the endoplasmic reticulum to the cis Golgi. Required for exocytosis of mediators during eosinophil and neutrophil degranulation, and target cell killing by natural killer cells. Required for focal exocytosis of late endocytic vesicles during phagosome formation (By similarity).</text>
</comment>
<comment type="subunit">
    <text evidence="1 2">Component of the SNARE complex composed of STX4, SNAP23 and VAMP7 that binds SYT7 during lysosomal exocytosis. Component of the SNARE complex composed of STX7, STX8, VAMP7 and VTI1B that is required for heterotypic fusion of late endosomes with lysosomes in liver cells. May interact with STX17 (By similarity). Interacts with PICALM (By similarity). Interacts with RAB21 (By similarity).</text>
</comment>
<comment type="subcellular location">
    <subcellularLocation>
        <location evidence="1">Cytoplasmic vesicle</location>
        <location evidence="1">Secretory vesicle membrane</location>
        <topology evidence="1">Single-pass type IV membrane protein</topology>
    </subcellularLocation>
    <subcellularLocation>
        <location evidence="1">Golgi apparatus</location>
        <location evidence="1">trans-Golgi network membrane</location>
        <topology evidence="1">Single-pass type IV membrane protein</topology>
    </subcellularLocation>
    <subcellularLocation>
        <location evidence="1">Late endosome membrane</location>
        <topology evidence="1">Single-pass type IV membrane protein</topology>
    </subcellularLocation>
    <subcellularLocation>
        <location evidence="1">Lysosome membrane</location>
        <topology evidence="1">Single-pass type IV membrane protein</topology>
    </subcellularLocation>
    <subcellularLocation>
        <location evidence="1">Endoplasmic reticulum membrane</location>
        <topology evidence="1">Single-pass type IV membrane protein</topology>
    </subcellularLocation>
    <subcellularLocation>
        <location evidence="1">Cytoplasmic vesicle</location>
        <location evidence="1">Phagosome membrane</location>
        <topology evidence="1">Single-pass type IV membrane protein</topology>
    </subcellularLocation>
    <subcellularLocation>
        <location evidence="1">Synapse</location>
        <location evidence="1">Synaptosome</location>
    </subcellularLocation>
    <text evidence="1">In immature neurons expression is localized in vesicular structures in axons and dendrites while in mature neurons it is localized to the somatodendritic region. Colocalizes with LAMP1 in kidney cells. Localization to the endoplasmic reticulum membrane was observed in the intestine but not in liver or kidney (By similarity).</text>
</comment>
<comment type="similarity">
    <text evidence="7">Belongs to the synaptobrevin family.</text>
</comment>
<name>VAMP7_PONAB</name>
<evidence type="ECO:0000250" key="1"/>
<evidence type="ECO:0000250" key="2">
    <source>
        <dbReference type="UniProtKB" id="P51809"/>
    </source>
</evidence>
<evidence type="ECO:0000250" key="3">
    <source>
        <dbReference type="UniProtKB" id="P70280"/>
    </source>
</evidence>
<evidence type="ECO:0000255" key="4"/>
<evidence type="ECO:0000255" key="5">
    <source>
        <dbReference type="PROSITE-ProRule" id="PRU00231"/>
    </source>
</evidence>
<evidence type="ECO:0000255" key="6">
    <source>
        <dbReference type="PROSITE-ProRule" id="PRU00290"/>
    </source>
</evidence>
<evidence type="ECO:0000305" key="7"/>
<gene>
    <name type="primary">VAMP7</name>
    <name type="synonym">SYBL1</name>
</gene>
<accession>Q5RF94</accession>
<dbReference type="EMBL" id="CR857267">
    <property type="protein sequence ID" value="CAH89563.1"/>
    <property type="molecule type" value="mRNA"/>
</dbReference>
<dbReference type="RefSeq" id="NP_001124684.1">
    <property type="nucleotide sequence ID" value="NM_001131212.2"/>
</dbReference>
<dbReference type="BMRB" id="Q5RF94"/>
<dbReference type="SMR" id="Q5RF94"/>
<dbReference type="STRING" id="9601.ENSPPYP00000023405"/>
<dbReference type="GeneID" id="100171531"/>
<dbReference type="KEGG" id="pon:100171531"/>
<dbReference type="CTD" id="6845"/>
<dbReference type="eggNOG" id="KOG0859">
    <property type="taxonomic scope" value="Eukaryota"/>
</dbReference>
<dbReference type="InParanoid" id="Q5RF94"/>
<dbReference type="OrthoDB" id="248747at2759"/>
<dbReference type="Proteomes" id="UP000001595">
    <property type="component" value="Unplaced"/>
</dbReference>
<dbReference type="GO" id="GO:0005789">
    <property type="term" value="C:endoplasmic reticulum membrane"/>
    <property type="evidence" value="ECO:0000250"/>
    <property type="project" value="UniProtKB"/>
</dbReference>
<dbReference type="GO" id="GO:0005794">
    <property type="term" value="C:Golgi apparatus"/>
    <property type="evidence" value="ECO:0007669"/>
    <property type="project" value="UniProtKB-SubCell"/>
</dbReference>
<dbReference type="GO" id="GO:0031902">
    <property type="term" value="C:late endosome membrane"/>
    <property type="evidence" value="ECO:0000250"/>
    <property type="project" value="UniProtKB"/>
</dbReference>
<dbReference type="GO" id="GO:0005765">
    <property type="term" value="C:lysosomal membrane"/>
    <property type="evidence" value="ECO:0000250"/>
    <property type="project" value="UniProtKB"/>
</dbReference>
<dbReference type="GO" id="GO:0043005">
    <property type="term" value="C:neuron projection"/>
    <property type="evidence" value="ECO:0000250"/>
    <property type="project" value="UniProtKB"/>
</dbReference>
<dbReference type="GO" id="GO:0045335">
    <property type="term" value="C:phagocytic vesicle"/>
    <property type="evidence" value="ECO:0000250"/>
    <property type="project" value="UniProtKB"/>
</dbReference>
<dbReference type="GO" id="GO:0030670">
    <property type="term" value="C:phagocytic vesicle membrane"/>
    <property type="evidence" value="ECO:0007669"/>
    <property type="project" value="UniProtKB-SubCell"/>
</dbReference>
<dbReference type="GO" id="GO:0031201">
    <property type="term" value="C:SNARE complex"/>
    <property type="evidence" value="ECO:0000250"/>
    <property type="project" value="UniProtKB"/>
</dbReference>
<dbReference type="GO" id="GO:0045202">
    <property type="term" value="C:synapse"/>
    <property type="evidence" value="ECO:0007669"/>
    <property type="project" value="UniProtKB-SubCell"/>
</dbReference>
<dbReference type="GO" id="GO:0030658">
    <property type="term" value="C:transport vesicle membrane"/>
    <property type="evidence" value="ECO:0007669"/>
    <property type="project" value="UniProtKB-SubCell"/>
</dbReference>
<dbReference type="GO" id="GO:0005484">
    <property type="term" value="F:SNAP receptor activity"/>
    <property type="evidence" value="ECO:0007669"/>
    <property type="project" value="TreeGrafter"/>
</dbReference>
<dbReference type="GO" id="GO:0000149">
    <property type="term" value="F:SNARE binding"/>
    <property type="evidence" value="ECO:0007669"/>
    <property type="project" value="TreeGrafter"/>
</dbReference>
<dbReference type="GO" id="GO:0017156">
    <property type="term" value="P:calcium-ion regulated exocytosis"/>
    <property type="evidence" value="ECO:0000250"/>
    <property type="project" value="UniProtKB"/>
</dbReference>
<dbReference type="GO" id="GO:0006888">
    <property type="term" value="P:endoplasmic reticulum to Golgi vesicle-mediated transport"/>
    <property type="evidence" value="ECO:0000250"/>
    <property type="project" value="UniProtKB"/>
</dbReference>
<dbReference type="GO" id="GO:0008333">
    <property type="term" value="P:endosome to lysosome transport"/>
    <property type="evidence" value="ECO:0000250"/>
    <property type="project" value="UniProtKB"/>
</dbReference>
<dbReference type="GO" id="GO:0043308">
    <property type="term" value="P:eosinophil degranulation"/>
    <property type="evidence" value="ECO:0000250"/>
    <property type="project" value="UniProtKB"/>
</dbReference>
<dbReference type="GO" id="GO:0043312">
    <property type="term" value="P:neutrophil degranulation"/>
    <property type="evidence" value="ECO:0000250"/>
    <property type="project" value="UniProtKB"/>
</dbReference>
<dbReference type="GO" id="GO:0006911">
    <property type="term" value="P:phagocytosis, engulfment"/>
    <property type="evidence" value="ECO:0000250"/>
    <property type="project" value="UniProtKB"/>
</dbReference>
<dbReference type="GO" id="GO:0015031">
    <property type="term" value="P:protein transport"/>
    <property type="evidence" value="ECO:0007669"/>
    <property type="project" value="UniProtKB-KW"/>
</dbReference>
<dbReference type="GO" id="GO:0006906">
    <property type="term" value="P:vesicle fusion"/>
    <property type="evidence" value="ECO:0000250"/>
    <property type="project" value="UniProtKB"/>
</dbReference>
<dbReference type="GO" id="GO:0016192">
    <property type="term" value="P:vesicle-mediated transport"/>
    <property type="evidence" value="ECO:0000250"/>
    <property type="project" value="UniProtKB"/>
</dbReference>
<dbReference type="CDD" id="cd14824">
    <property type="entry name" value="Longin"/>
    <property type="match status" value="1"/>
</dbReference>
<dbReference type="CDD" id="cd15871">
    <property type="entry name" value="R-SNARE_VAMP7"/>
    <property type="match status" value="1"/>
</dbReference>
<dbReference type="FunFam" id="1.20.5.110:FF:000004">
    <property type="entry name" value="Vesicle-associated membrane protein 7"/>
    <property type="match status" value="1"/>
</dbReference>
<dbReference type="FunFam" id="3.30.450.50:FF:000006">
    <property type="entry name" value="Vesicle-associated membrane protein 7"/>
    <property type="match status" value="1"/>
</dbReference>
<dbReference type="Gene3D" id="1.20.5.110">
    <property type="match status" value="1"/>
</dbReference>
<dbReference type="Gene3D" id="3.30.450.50">
    <property type="entry name" value="Longin domain"/>
    <property type="match status" value="1"/>
</dbReference>
<dbReference type="InterPro" id="IPR011012">
    <property type="entry name" value="Longin-like_dom_sf"/>
</dbReference>
<dbReference type="InterPro" id="IPR010908">
    <property type="entry name" value="Longin_dom"/>
</dbReference>
<dbReference type="InterPro" id="IPR001388">
    <property type="entry name" value="Synaptobrevin-like"/>
</dbReference>
<dbReference type="InterPro" id="IPR051097">
    <property type="entry name" value="Synaptobrevin-like_transport"/>
</dbReference>
<dbReference type="InterPro" id="IPR042855">
    <property type="entry name" value="V_SNARE_CC"/>
</dbReference>
<dbReference type="PANTHER" id="PTHR21136">
    <property type="entry name" value="SNARE PROTEINS"/>
    <property type="match status" value="1"/>
</dbReference>
<dbReference type="PANTHER" id="PTHR21136:SF196">
    <property type="entry name" value="VESICLE-ASSOCIATED MEMBRANE PROTEIN 7"/>
    <property type="match status" value="1"/>
</dbReference>
<dbReference type="Pfam" id="PF13774">
    <property type="entry name" value="Longin"/>
    <property type="match status" value="1"/>
</dbReference>
<dbReference type="Pfam" id="PF00957">
    <property type="entry name" value="Synaptobrevin"/>
    <property type="match status" value="1"/>
</dbReference>
<dbReference type="PRINTS" id="PR00219">
    <property type="entry name" value="SYNAPTOBREVN"/>
</dbReference>
<dbReference type="SMART" id="SM01270">
    <property type="entry name" value="Longin"/>
    <property type="match status" value="1"/>
</dbReference>
<dbReference type="SUPFAM" id="SSF58038">
    <property type="entry name" value="SNARE fusion complex"/>
    <property type="match status" value="1"/>
</dbReference>
<dbReference type="SUPFAM" id="SSF64356">
    <property type="entry name" value="SNARE-like"/>
    <property type="match status" value="1"/>
</dbReference>
<dbReference type="PROSITE" id="PS50859">
    <property type="entry name" value="LONGIN"/>
    <property type="match status" value="1"/>
</dbReference>
<dbReference type="PROSITE" id="PS00417">
    <property type="entry name" value="SYNAPTOBREVIN"/>
    <property type="match status" value="1"/>
</dbReference>
<dbReference type="PROSITE" id="PS50892">
    <property type="entry name" value="V_SNARE"/>
    <property type="match status" value="1"/>
</dbReference>
<protein>
    <recommendedName>
        <fullName>Vesicle-associated membrane protein 7</fullName>
        <shortName>VAMP-7</shortName>
    </recommendedName>
    <alternativeName>
        <fullName>Synaptobrevin-like protein 1</fullName>
    </alternativeName>
</protein>
<keyword id="KW-0007">Acetylation</keyword>
<keyword id="KW-0175">Coiled coil</keyword>
<keyword id="KW-0968">Cytoplasmic vesicle</keyword>
<keyword id="KW-0256">Endoplasmic reticulum</keyword>
<keyword id="KW-0967">Endosome</keyword>
<keyword id="KW-0268">Exocytosis</keyword>
<keyword id="KW-0333">Golgi apparatus</keyword>
<keyword id="KW-0458">Lysosome</keyword>
<keyword id="KW-0472">Membrane</keyword>
<keyword id="KW-0597">Phosphoprotein</keyword>
<keyword id="KW-0653">Protein transport</keyword>
<keyword id="KW-1185">Reference proteome</keyword>
<keyword id="KW-0735">Signal-anchor</keyword>
<keyword id="KW-0770">Synapse</keyword>
<keyword id="KW-0771">Synaptosome</keyword>
<keyword id="KW-0812">Transmembrane</keyword>
<keyword id="KW-1133">Transmembrane helix</keyword>
<keyword id="KW-0813">Transport</keyword>